<dbReference type="EMBL" id="Z97341">
    <property type="protein sequence ID" value="CAB10423.1"/>
    <property type="status" value="ALT_SEQ"/>
    <property type="molecule type" value="Genomic_DNA"/>
</dbReference>
<dbReference type="EMBL" id="AL161544">
    <property type="protein sequence ID" value="CAB78689.1"/>
    <property type="status" value="ALT_SEQ"/>
    <property type="molecule type" value="Genomic_DNA"/>
</dbReference>
<dbReference type="EMBL" id="CP002687">
    <property type="protein sequence ID" value="AEE83758.1"/>
    <property type="molecule type" value="Genomic_DNA"/>
</dbReference>
<dbReference type="PIR" id="E71431">
    <property type="entry name" value="E71431"/>
</dbReference>
<dbReference type="RefSeq" id="NP_193380.3">
    <property type="nucleotide sequence ID" value="NM_117745.4"/>
</dbReference>
<dbReference type="SMR" id="O23491"/>
<dbReference type="FunCoup" id="O23491">
    <property type="interactions" value="419"/>
</dbReference>
<dbReference type="PaxDb" id="3702-AT4G16470.1"/>
<dbReference type="EnsemblPlants" id="AT4G16470.1">
    <property type="protein sequence ID" value="AT4G16470.1"/>
    <property type="gene ID" value="AT4G16470"/>
</dbReference>
<dbReference type="GeneID" id="827345"/>
<dbReference type="Gramene" id="AT4G16470.1">
    <property type="protein sequence ID" value="AT4G16470.1"/>
    <property type="gene ID" value="AT4G16470"/>
</dbReference>
<dbReference type="KEGG" id="ath:AT4G16470"/>
<dbReference type="Araport" id="AT4G16470"/>
<dbReference type="TAIR" id="AT4G16470"/>
<dbReference type="eggNOG" id="KOG4197">
    <property type="taxonomic scope" value="Eukaryota"/>
</dbReference>
<dbReference type="HOGENOM" id="CLU_002706_0_0_1"/>
<dbReference type="InParanoid" id="O23491"/>
<dbReference type="OMA" id="CIFRKEY"/>
<dbReference type="PhylomeDB" id="O23491"/>
<dbReference type="PRO" id="PR:O23491"/>
<dbReference type="Proteomes" id="UP000006548">
    <property type="component" value="Chromosome 4"/>
</dbReference>
<dbReference type="ExpressionAtlas" id="O23491">
    <property type="expression patterns" value="baseline and differential"/>
</dbReference>
<dbReference type="GO" id="GO:0003723">
    <property type="term" value="F:RNA binding"/>
    <property type="evidence" value="ECO:0007669"/>
    <property type="project" value="InterPro"/>
</dbReference>
<dbReference type="GO" id="GO:0009451">
    <property type="term" value="P:RNA modification"/>
    <property type="evidence" value="ECO:0007669"/>
    <property type="project" value="InterPro"/>
</dbReference>
<dbReference type="FunFam" id="1.25.40.10:FF:000341">
    <property type="entry name" value="Pentatricopeptide repeat-containing protein chloroplastic"/>
    <property type="match status" value="1"/>
</dbReference>
<dbReference type="FunFam" id="1.25.40.10:FF:000090">
    <property type="entry name" value="Pentatricopeptide repeat-containing protein, chloroplastic"/>
    <property type="match status" value="1"/>
</dbReference>
<dbReference type="Gene3D" id="1.25.40.10">
    <property type="entry name" value="Tetratricopeptide repeat domain"/>
    <property type="match status" value="2"/>
</dbReference>
<dbReference type="InterPro" id="IPR046848">
    <property type="entry name" value="E_motif"/>
</dbReference>
<dbReference type="InterPro" id="IPR002885">
    <property type="entry name" value="Pentatricopeptide_rpt"/>
</dbReference>
<dbReference type="InterPro" id="IPR046960">
    <property type="entry name" value="PPR_At4g14850-like_plant"/>
</dbReference>
<dbReference type="InterPro" id="IPR011990">
    <property type="entry name" value="TPR-like_helical_dom_sf"/>
</dbReference>
<dbReference type="NCBIfam" id="TIGR00756">
    <property type="entry name" value="PPR"/>
    <property type="match status" value="2"/>
</dbReference>
<dbReference type="PANTHER" id="PTHR47926">
    <property type="entry name" value="PENTATRICOPEPTIDE REPEAT-CONTAINING PROTEIN"/>
    <property type="match status" value="1"/>
</dbReference>
<dbReference type="PANTHER" id="PTHR47926:SF347">
    <property type="entry name" value="PENTATRICOPEPTIDE REPEAT-CONTAINING PROTEIN"/>
    <property type="match status" value="1"/>
</dbReference>
<dbReference type="Pfam" id="PF20431">
    <property type="entry name" value="E_motif"/>
    <property type="match status" value="1"/>
</dbReference>
<dbReference type="Pfam" id="PF13041">
    <property type="entry name" value="PPR_2"/>
    <property type="match status" value="2"/>
</dbReference>
<dbReference type="PROSITE" id="PS51375">
    <property type="entry name" value="PPR"/>
    <property type="match status" value="8"/>
</dbReference>
<proteinExistence type="evidence at transcript level"/>
<sequence>MKTLISSSLSHKSQCLTICFKLNKLAMVYYTREFQTEASQTSASGSMFSGNATTILRRMLAEKRIGRFQVENQRKTEKLDKTLKGLCVTGRLKEAVGLLWSSGLQVEPETYAVLLQECKQRKEYTKGKRIHAQMFVVGFALNEYLKVKLLILYALSGDLQTAGILFRSLKIRDLIPWNAMISGYVQKGLEQEGLFIYYDMRQNRIVPDQYTFASVFRACSALDRLEHGKRAHAVMIKRCIKSNIIVDSALVDMYFKCSSFSDGHRVFDQLSTRNVITWTSLISGYGYHGKVSEVLKCFEKMKEEGCRPNPVTFLVVLTACNHGGLVDKGWEHFYSMKRDYGIEPEGQHYAAMVDTLGRAGRLQEAYEFVMKSPCKEHPPVWGSLLGACRIHGNVKLLELAATKFLELDPTNGGNYVVFANGYASCGLREAASKVRRKMENAGVKKDPGYSQIELQGEVHRFMKDDTSHRLSEKIYKKVHEMTSFFMDIDYYPDGLDSSCPV</sequence>
<keyword id="KW-1185">Reference proteome</keyword>
<keyword id="KW-0677">Repeat</keyword>
<reference key="1">
    <citation type="journal article" date="1998" name="Nature">
        <title>Analysis of 1.9 Mb of contiguous sequence from chromosome 4 of Arabidopsis thaliana.</title>
        <authorList>
            <person name="Bevan M."/>
            <person name="Bancroft I."/>
            <person name="Bent E."/>
            <person name="Love K."/>
            <person name="Goodman H.M."/>
            <person name="Dean C."/>
            <person name="Bergkamp R."/>
            <person name="Dirkse W."/>
            <person name="van Staveren M."/>
            <person name="Stiekema W."/>
            <person name="Drost L."/>
            <person name="Ridley P."/>
            <person name="Hudson S.-A."/>
            <person name="Patel K."/>
            <person name="Murphy G."/>
            <person name="Piffanelli P."/>
            <person name="Wedler H."/>
            <person name="Wedler E."/>
            <person name="Wambutt R."/>
            <person name="Weitzenegger T."/>
            <person name="Pohl T."/>
            <person name="Terryn N."/>
            <person name="Gielen J."/>
            <person name="Villarroel R."/>
            <person name="De Clercq R."/>
            <person name="van Montagu M."/>
            <person name="Lecharny A."/>
            <person name="Aubourg S."/>
            <person name="Gy I."/>
            <person name="Kreis M."/>
            <person name="Lao N."/>
            <person name="Kavanagh T."/>
            <person name="Hempel S."/>
            <person name="Kotter P."/>
            <person name="Entian K.-D."/>
            <person name="Rieger M."/>
            <person name="Schaefer M."/>
            <person name="Funk B."/>
            <person name="Mueller-Auer S."/>
            <person name="Silvey M."/>
            <person name="James R."/>
            <person name="Monfort A."/>
            <person name="Pons A."/>
            <person name="Puigdomenech P."/>
            <person name="Douka A."/>
            <person name="Voukelatou E."/>
            <person name="Milioni D."/>
            <person name="Hatzopoulos P."/>
            <person name="Piravandi E."/>
            <person name="Obermaier B."/>
            <person name="Hilbert H."/>
            <person name="Duesterhoeft A."/>
            <person name="Moores T."/>
            <person name="Jones J.D.G."/>
            <person name="Eneva T."/>
            <person name="Palme K."/>
            <person name="Benes V."/>
            <person name="Rechmann S."/>
            <person name="Ansorge W."/>
            <person name="Cooke R."/>
            <person name="Berger C."/>
            <person name="Delseny M."/>
            <person name="Voet M."/>
            <person name="Volckaert G."/>
            <person name="Mewes H.-W."/>
            <person name="Klosterman S."/>
            <person name="Schueller C."/>
            <person name="Chalwatzis N."/>
        </authorList>
    </citation>
    <scope>NUCLEOTIDE SEQUENCE [LARGE SCALE GENOMIC DNA]</scope>
    <source>
        <strain>cv. Columbia</strain>
    </source>
</reference>
<reference key="2">
    <citation type="journal article" date="1999" name="Nature">
        <title>Sequence and analysis of chromosome 4 of the plant Arabidopsis thaliana.</title>
        <authorList>
            <person name="Mayer K.F.X."/>
            <person name="Schueller C."/>
            <person name="Wambutt R."/>
            <person name="Murphy G."/>
            <person name="Volckaert G."/>
            <person name="Pohl T."/>
            <person name="Duesterhoeft A."/>
            <person name="Stiekema W."/>
            <person name="Entian K.-D."/>
            <person name="Terryn N."/>
            <person name="Harris B."/>
            <person name="Ansorge W."/>
            <person name="Brandt P."/>
            <person name="Grivell L.A."/>
            <person name="Rieger M."/>
            <person name="Weichselgartner M."/>
            <person name="de Simone V."/>
            <person name="Obermaier B."/>
            <person name="Mache R."/>
            <person name="Mueller M."/>
            <person name="Kreis M."/>
            <person name="Delseny M."/>
            <person name="Puigdomenech P."/>
            <person name="Watson M."/>
            <person name="Schmidtheini T."/>
            <person name="Reichert B."/>
            <person name="Portetelle D."/>
            <person name="Perez-Alonso M."/>
            <person name="Boutry M."/>
            <person name="Bancroft I."/>
            <person name="Vos P."/>
            <person name="Hoheisel J."/>
            <person name="Zimmermann W."/>
            <person name="Wedler H."/>
            <person name="Ridley P."/>
            <person name="Langham S.-A."/>
            <person name="McCullagh B."/>
            <person name="Bilham L."/>
            <person name="Robben J."/>
            <person name="van der Schueren J."/>
            <person name="Grymonprez B."/>
            <person name="Chuang Y.-J."/>
            <person name="Vandenbussche F."/>
            <person name="Braeken M."/>
            <person name="Weltjens I."/>
            <person name="Voet M."/>
            <person name="Bastiaens I."/>
            <person name="Aert R."/>
            <person name="Defoor E."/>
            <person name="Weitzenegger T."/>
            <person name="Bothe G."/>
            <person name="Ramsperger U."/>
            <person name="Hilbert H."/>
            <person name="Braun M."/>
            <person name="Holzer E."/>
            <person name="Brandt A."/>
            <person name="Peters S."/>
            <person name="van Staveren M."/>
            <person name="Dirkse W."/>
            <person name="Mooijman P."/>
            <person name="Klein Lankhorst R."/>
            <person name="Rose M."/>
            <person name="Hauf J."/>
            <person name="Koetter P."/>
            <person name="Berneiser S."/>
            <person name="Hempel S."/>
            <person name="Feldpausch M."/>
            <person name="Lamberth S."/>
            <person name="Van den Daele H."/>
            <person name="De Keyser A."/>
            <person name="Buysshaert C."/>
            <person name="Gielen J."/>
            <person name="Villarroel R."/>
            <person name="De Clercq R."/>
            <person name="van Montagu M."/>
            <person name="Rogers J."/>
            <person name="Cronin A."/>
            <person name="Quail M.A."/>
            <person name="Bray-Allen S."/>
            <person name="Clark L."/>
            <person name="Doggett J."/>
            <person name="Hall S."/>
            <person name="Kay M."/>
            <person name="Lennard N."/>
            <person name="McLay K."/>
            <person name="Mayes R."/>
            <person name="Pettett A."/>
            <person name="Rajandream M.A."/>
            <person name="Lyne M."/>
            <person name="Benes V."/>
            <person name="Rechmann S."/>
            <person name="Borkova D."/>
            <person name="Bloecker H."/>
            <person name="Scharfe M."/>
            <person name="Grimm M."/>
            <person name="Loehnert T.-H."/>
            <person name="Dose S."/>
            <person name="de Haan M."/>
            <person name="Maarse A.C."/>
            <person name="Schaefer M."/>
            <person name="Mueller-Auer S."/>
            <person name="Gabel C."/>
            <person name="Fuchs M."/>
            <person name="Fartmann B."/>
            <person name="Granderath K."/>
            <person name="Dauner D."/>
            <person name="Herzl A."/>
            <person name="Neumann S."/>
            <person name="Argiriou A."/>
            <person name="Vitale D."/>
            <person name="Liguori R."/>
            <person name="Piravandi E."/>
            <person name="Massenet O."/>
            <person name="Quigley F."/>
            <person name="Clabauld G."/>
            <person name="Muendlein A."/>
            <person name="Felber R."/>
            <person name="Schnabl S."/>
            <person name="Hiller R."/>
            <person name="Schmidt W."/>
            <person name="Lecharny A."/>
            <person name="Aubourg S."/>
            <person name="Chefdor F."/>
            <person name="Cooke R."/>
            <person name="Berger C."/>
            <person name="Monfort A."/>
            <person name="Casacuberta E."/>
            <person name="Gibbons T."/>
            <person name="Weber N."/>
            <person name="Vandenbol M."/>
            <person name="Bargues M."/>
            <person name="Terol J."/>
            <person name="Torres A."/>
            <person name="Perez-Perez A."/>
            <person name="Purnelle B."/>
            <person name="Bent E."/>
            <person name="Johnson S."/>
            <person name="Tacon D."/>
            <person name="Jesse T."/>
            <person name="Heijnen L."/>
            <person name="Schwarz S."/>
            <person name="Scholler P."/>
            <person name="Heber S."/>
            <person name="Francs P."/>
            <person name="Bielke C."/>
            <person name="Frishman D."/>
            <person name="Haase D."/>
            <person name="Lemcke K."/>
            <person name="Mewes H.-W."/>
            <person name="Stocker S."/>
            <person name="Zaccaria P."/>
            <person name="Bevan M."/>
            <person name="Wilson R.K."/>
            <person name="de la Bastide M."/>
            <person name="Habermann K."/>
            <person name="Parnell L."/>
            <person name="Dedhia N."/>
            <person name="Gnoj L."/>
            <person name="Schutz K."/>
            <person name="Huang E."/>
            <person name="Spiegel L."/>
            <person name="Sekhon M."/>
            <person name="Murray J."/>
            <person name="Sheet P."/>
            <person name="Cordes M."/>
            <person name="Abu-Threideh J."/>
            <person name="Stoneking T."/>
            <person name="Kalicki J."/>
            <person name="Graves T."/>
            <person name="Harmon G."/>
            <person name="Edwards J."/>
            <person name="Latreille P."/>
            <person name="Courtney L."/>
            <person name="Cloud J."/>
            <person name="Abbott A."/>
            <person name="Scott K."/>
            <person name="Johnson D."/>
            <person name="Minx P."/>
            <person name="Bentley D."/>
            <person name="Fulton B."/>
            <person name="Miller N."/>
            <person name="Greco T."/>
            <person name="Kemp K."/>
            <person name="Kramer J."/>
            <person name="Fulton L."/>
            <person name="Mardis E."/>
            <person name="Dante M."/>
            <person name="Pepin K."/>
            <person name="Hillier L.W."/>
            <person name="Nelson J."/>
            <person name="Spieth J."/>
            <person name="Ryan E."/>
            <person name="Andrews S."/>
            <person name="Geisel C."/>
            <person name="Layman D."/>
            <person name="Du H."/>
            <person name="Ali J."/>
            <person name="Berghoff A."/>
            <person name="Jones K."/>
            <person name="Drone K."/>
            <person name="Cotton M."/>
            <person name="Joshu C."/>
            <person name="Antonoiu B."/>
            <person name="Zidanic M."/>
            <person name="Strong C."/>
            <person name="Sun H."/>
            <person name="Lamar B."/>
            <person name="Yordan C."/>
            <person name="Ma P."/>
            <person name="Zhong J."/>
            <person name="Preston R."/>
            <person name="Vil D."/>
            <person name="Shekher M."/>
            <person name="Matero A."/>
            <person name="Shah R."/>
            <person name="Swaby I.K."/>
            <person name="O'Shaughnessy A."/>
            <person name="Rodriguez M."/>
            <person name="Hoffman J."/>
            <person name="Till S."/>
            <person name="Granat S."/>
            <person name="Shohdy N."/>
            <person name="Hasegawa A."/>
            <person name="Hameed A."/>
            <person name="Lodhi M."/>
            <person name="Johnson A."/>
            <person name="Chen E."/>
            <person name="Marra M.A."/>
            <person name="Martienssen R."/>
            <person name="McCombie W.R."/>
        </authorList>
    </citation>
    <scope>NUCLEOTIDE SEQUENCE [LARGE SCALE GENOMIC DNA]</scope>
    <source>
        <strain>cv. Columbia</strain>
    </source>
</reference>
<reference key="3">
    <citation type="journal article" date="2017" name="Plant J.">
        <title>Araport11: a complete reannotation of the Arabidopsis thaliana reference genome.</title>
        <authorList>
            <person name="Cheng C.Y."/>
            <person name="Krishnakumar V."/>
            <person name="Chan A.P."/>
            <person name="Thibaud-Nissen F."/>
            <person name="Schobel S."/>
            <person name="Town C.D."/>
        </authorList>
    </citation>
    <scope>GENOME REANNOTATION</scope>
    <source>
        <strain>cv. Columbia</strain>
    </source>
</reference>
<reference key="4">
    <citation type="journal article" date="2000" name="Plant Mol. Biol.">
        <title>In Arabidopsis thaliana, 1% of the genome codes for a novel protein family unique to plants.</title>
        <authorList>
            <person name="Aubourg S."/>
            <person name="Boudet N."/>
            <person name="Kreis M."/>
            <person name="Lecharny A."/>
        </authorList>
    </citation>
    <scope>GENE FAMILY</scope>
</reference>
<reference key="5">
    <citation type="journal article" date="2004" name="Plant Cell">
        <title>Genome-wide analysis of Arabidopsis pentatricopeptide repeat proteins reveals their essential role in organelle biogenesis.</title>
        <authorList>
            <person name="Lurin C."/>
            <person name="Andres C."/>
            <person name="Aubourg S."/>
            <person name="Bellaoui M."/>
            <person name="Bitton F."/>
            <person name="Bruyere C."/>
            <person name="Caboche M."/>
            <person name="Debast C."/>
            <person name="Gualberto J."/>
            <person name="Hoffmann B."/>
            <person name="Lecharny A."/>
            <person name="Le Ret M."/>
            <person name="Martin-Magniette M.-L."/>
            <person name="Mireau H."/>
            <person name="Peeters N."/>
            <person name="Renou J.-P."/>
            <person name="Szurek B."/>
            <person name="Taconnat L."/>
            <person name="Small I."/>
        </authorList>
    </citation>
    <scope>GENE FAMILY</scope>
</reference>
<evidence type="ECO:0000305" key="1"/>
<accession>O23491</accession>
<name>PP315_ARATH</name>
<protein>
    <recommendedName>
        <fullName>Pentatricopeptide repeat-containing protein At4g16470</fullName>
    </recommendedName>
</protein>
<organism>
    <name type="scientific">Arabidopsis thaliana</name>
    <name type="common">Mouse-ear cress</name>
    <dbReference type="NCBI Taxonomy" id="3702"/>
    <lineage>
        <taxon>Eukaryota</taxon>
        <taxon>Viridiplantae</taxon>
        <taxon>Streptophyta</taxon>
        <taxon>Embryophyta</taxon>
        <taxon>Tracheophyta</taxon>
        <taxon>Spermatophyta</taxon>
        <taxon>Magnoliopsida</taxon>
        <taxon>eudicotyledons</taxon>
        <taxon>Gunneridae</taxon>
        <taxon>Pentapetalae</taxon>
        <taxon>rosids</taxon>
        <taxon>malvids</taxon>
        <taxon>Brassicales</taxon>
        <taxon>Brassicaceae</taxon>
        <taxon>Camelineae</taxon>
        <taxon>Arabidopsis</taxon>
    </lineage>
</organism>
<gene>
    <name type="primary">PCMP-E12</name>
    <name type="ordered locus">At4g16470</name>
    <name type="ORF">dl4260c</name>
    <name type="ORF">FCAALL.374</name>
</gene>
<feature type="chain" id="PRO_0000363433" description="Pentatricopeptide repeat-containing protein At4g16470">
    <location>
        <begin position="1"/>
        <end position="501"/>
    </location>
</feature>
<feature type="repeat" description="PPR 1">
    <location>
        <begin position="107"/>
        <end position="141"/>
    </location>
</feature>
<feature type="repeat" description="PPR 2">
    <location>
        <begin position="142"/>
        <end position="172"/>
    </location>
</feature>
<feature type="repeat" description="PPR 3">
    <location>
        <begin position="173"/>
        <end position="207"/>
    </location>
</feature>
<feature type="repeat" description="PPR 4">
    <location>
        <begin position="208"/>
        <end position="242"/>
    </location>
</feature>
<feature type="repeat" description="PPR 5">
    <location>
        <begin position="243"/>
        <end position="273"/>
    </location>
</feature>
<feature type="repeat" description="PPR 6">
    <location>
        <begin position="274"/>
        <end position="308"/>
    </location>
</feature>
<feature type="repeat" description="PPR 7">
    <location>
        <begin position="309"/>
        <end position="344"/>
    </location>
</feature>
<feature type="repeat" description="PPR 8">
    <location>
        <begin position="345"/>
        <end position="379"/>
    </location>
</feature>
<feature type="region of interest" description="Type E motif">
    <location>
        <begin position="380"/>
        <end position="455"/>
    </location>
</feature>
<feature type="region of interest" description="Type E(+) motif">
    <location>
        <begin position="456"/>
        <end position="486"/>
    </location>
</feature>
<comment type="similarity">
    <text evidence="1">Belongs to the PPR family. PCMP-E subfamily.</text>
</comment>
<comment type="sequence caution" evidence="1">
    <conflict type="erroneous gene model prediction">
        <sequence resource="EMBL-CDS" id="CAB10423"/>
    </conflict>
</comment>
<comment type="sequence caution" evidence="1">
    <conflict type="erroneous gene model prediction">
        <sequence resource="EMBL-CDS" id="CAB78689"/>
    </conflict>
</comment>
<comment type="online information" name="Pentatricopeptide repeat proteins">
    <link uri="https://ppr.plantenergy.uwa.edu.au"/>
</comment>